<reference key="1">
    <citation type="journal article" date="1984" name="Nature">
        <title>Primary structure and genomic organization of the histidine-rich protein of the malaria parasite Plasmodium lophurae.</title>
        <authorList>
            <person name="Ravetch J.V."/>
            <person name="Feder R."/>
            <person name="Pavlovec A."/>
            <person name="Blobel G."/>
        </authorList>
    </citation>
    <scope>NUCLEOTIDE SEQUENCE [GENOMIC DNA]</scope>
</reference>
<evidence type="ECO:0000256" key="1">
    <source>
        <dbReference type="SAM" id="MobiDB-lite"/>
    </source>
</evidence>
<evidence type="ECO:0000305" key="2"/>
<proteinExistence type="predicted"/>
<keyword id="KW-0325">Glycoprotein</keyword>
<keyword id="KW-0461">Malaria</keyword>
<keyword id="KW-0677">Repeat</keyword>
<keyword id="KW-0732">Signal</keyword>
<organism>
    <name type="scientific">Plasmodium lophurae</name>
    <dbReference type="NCBI Taxonomy" id="5853"/>
    <lineage>
        <taxon>Eukaryota</taxon>
        <taxon>Sar</taxon>
        <taxon>Alveolata</taxon>
        <taxon>Apicomplexa</taxon>
        <taxon>Aconoidasida</taxon>
        <taxon>Haemosporida</taxon>
        <taxon>Plasmodiidae</taxon>
        <taxon>Plasmodium</taxon>
        <taxon>Plasmodium (Giovannolaia)</taxon>
    </lineage>
</organism>
<dbReference type="EMBL" id="X01469">
    <property type="protein sequence ID" value="CAA25698.1"/>
    <property type="molecule type" value="Genomic_DNA"/>
</dbReference>
<dbReference type="PIR" id="A22692">
    <property type="entry name" value="KGZQHL"/>
</dbReference>
<feature type="signal peptide">
    <location>
        <begin position="1"/>
        <end position="23"/>
    </location>
</feature>
<feature type="propeptide" id="PRO_0000024542">
    <location>
        <begin position="24"/>
        <end position="47"/>
    </location>
</feature>
<feature type="chain" id="PRO_0000024543" description="Histidine-rich glycoprotein">
    <location>
        <begin position="48"/>
        <end position="351"/>
    </location>
</feature>
<feature type="repeat" description="16-1">
    <location>
        <begin position="59"/>
        <end position="74"/>
    </location>
</feature>
<feature type="repeat" description="16-2">
    <location>
        <begin position="75"/>
        <end position="90"/>
    </location>
</feature>
<feature type="repeat" description="17-1">
    <location>
        <begin position="91"/>
        <end position="107"/>
    </location>
</feature>
<feature type="repeat" description="17-2">
    <location>
        <begin position="108"/>
        <end position="123"/>
    </location>
</feature>
<feature type="repeat" description="15-1">
    <location>
        <begin position="124"/>
        <end position="138"/>
    </location>
</feature>
<feature type="repeat" description="15-2">
    <location>
        <begin position="139"/>
        <end position="153"/>
    </location>
</feature>
<feature type="region of interest" description="Disordered" evidence="1">
    <location>
        <begin position="57"/>
        <end position="351"/>
    </location>
</feature>
<feature type="region of interest" description="2 X 16 AA tandem repeats">
    <location>
        <begin position="59"/>
        <end position="90"/>
    </location>
</feature>
<feature type="region of interest" description="2 X 17 AA tandem repeats">
    <location>
        <begin position="91"/>
        <end position="123"/>
    </location>
</feature>
<feature type="region of interest" description="2 X 15 AA tandem repeats">
    <location>
        <begin position="124"/>
        <end position="153"/>
    </location>
</feature>
<feature type="region of interest" description="18 X 10 AA tandem repeats">
    <location>
        <begin position="173"/>
        <end position="351"/>
    </location>
</feature>
<feature type="compositionally biased region" description="Basic and acidic residues" evidence="1">
    <location>
        <begin position="57"/>
        <end position="91"/>
    </location>
</feature>
<feature type="compositionally biased region" description="Basic residues" evidence="1">
    <location>
        <begin position="92"/>
        <end position="351"/>
    </location>
</feature>
<feature type="glycosylation site" description="N-linked (GlcNAc...) asparagine" evidence="2">
    <location>
        <position position="40"/>
    </location>
</feature>
<sequence>MFTSLKKVATFSFLVWISQYSGSNSCSSSLVKHIPQTGSNLTFDRVLVEDTVHPEHLHEEHHHHHPEEHHEPHHEEHHHHHPEEHHEPHHEEHHHHHPHPHHHHHHHPPHHHHHLGHHHHHHHAAHHHHHEEHHHHHHAAHHHHHEEHHHHHHAAHHHPWFHHHHLGYHHHHAPHHHHHHHHAPHHHHHHHHAPHHHHHHHHAPHHHHHHHHAPHHHHHHHHGHHHHHHHHHGHHHHHHHHHGHHHHHHHHHDAHHHHHHHHDAHHHHHHHHDAHHHHHHHHDAHHHHHHHHDAHHHHHHHHDAHHHHHHHDAHHHHHHHHDAHHHHHHHHDAHHHHHHHHDAHHHHHHHH</sequence>
<protein>
    <recommendedName>
        <fullName>Histidine-rich glycoprotein</fullName>
    </recommendedName>
</protein>
<name>HRPX_PLALO</name>
<comment type="miscellaneous">
    <text>In the intraerythrocytic stages of development of P.lophurae in ducks, there is a synthesis of a major protein that accumulates to comprise at least 50% of the cellular mass: the histidine rich protein.</text>
</comment>
<accession>P04929</accession>